<comment type="function">
    <text evidence="1">Participates actively in the response to hyperosmotic and heat shock by preventing the aggregation of stress-denatured proteins and by disaggregating proteins, also in an autonomous, DnaK-independent fashion. Unfolded proteins bind initially to DnaJ; upon interaction with the DnaJ-bound protein, DnaK hydrolyzes its bound ATP, resulting in the formation of a stable complex. GrpE releases ADP from DnaK; ATP binding to DnaK triggers the release of the substrate protein, thus completing the reaction cycle. Several rounds of ATP-dependent interactions between DnaJ, DnaK and GrpE are required for fully efficient folding. Also involved, together with DnaK and GrpE, in the DNA replication of plasmids through activation of initiation proteins.</text>
</comment>
<comment type="cofactor">
    <cofactor evidence="1">
        <name>Zn(2+)</name>
        <dbReference type="ChEBI" id="CHEBI:29105"/>
    </cofactor>
    <text evidence="1">Binds 2 Zn(2+) ions per monomer.</text>
</comment>
<comment type="subunit">
    <text evidence="1">Homodimer.</text>
</comment>
<comment type="subcellular location">
    <subcellularLocation>
        <location evidence="1">Cytoplasm</location>
    </subcellularLocation>
</comment>
<comment type="domain">
    <text evidence="1">The J domain is necessary and sufficient to stimulate DnaK ATPase activity. Zinc center 1 plays an important role in the autonomous, DnaK-independent chaperone activity of DnaJ. Zinc center 2 is essential for interaction with DnaK and for DnaJ activity.</text>
</comment>
<comment type="similarity">
    <text evidence="1">Belongs to the DnaJ family.</text>
</comment>
<sequence length="369" mass="40042">MSQSDYYEVLGVGRDADENELKKAYRKLAMKYHPDRNAGDTKAEERFKNIKEAYEILSDPNKRAAYDQFGHAGLNGGMGGAGAQGFSDAFSDIFSDLFGMRGGGRSSVHRGADLRYNLEITLEQAARGAETQIRIPRQEVCDTCHGSGAKPGTSPKTCPTCNGHGQIRMQQGFFSIQQTCSHCQGSGKVVSDPCGDCHGAGWVKRQKTLSVRIPAGVDEGDSIRLTGEGEAGANGGQAGDLYIVIHLASHPVFQREGNHLHCEIPISFTVAALGGEIEVPTLDGHARIKVPAGTQTGKIFRLRSKGITGVRNQSTGDLLCHVAVETPVDLTARQKELLEEFESISQKDGSRHHPRAKSWMEKAREFFAE</sequence>
<accession>O06431</accession>
<dbReference type="EMBL" id="AB018706">
    <property type="protein sequence ID" value="BAA33936.1"/>
    <property type="molecule type" value="Genomic_DNA"/>
</dbReference>
<dbReference type="EMBL" id="AL954747">
    <property type="protein sequence ID" value="CAD85859.1"/>
    <property type="molecule type" value="Genomic_DNA"/>
</dbReference>
<dbReference type="RefSeq" id="WP_011112480.1">
    <property type="nucleotide sequence ID" value="NC_004757.1"/>
</dbReference>
<dbReference type="SMR" id="O06431"/>
<dbReference type="STRING" id="228410.NE1948"/>
<dbReference type="GeneID" id="87105102"/>
<dbReference type="KEGG" id="neu:NE1948"/>
<dbReference type="eggNOG" id="COG0484">
    <property type="taxonomic scope" value="Bacteria"/>
</dbReference>
<dbReference type="HOGENOM" id="CLU_017633_0_7_4"/>
<dbReference type="OrthoDB" id="9779889at2"/>
<dbReference type="PhylomeDB" id="O06431"/>
<dbReference type="Proteomes" id="UP000001416">
    <property type="component" value="Chromosome"/>
</dbReference>
<dbReference type="GO" id="GO:0005737">
    <property type="term" value="C:cytoplasm"/>
    <property type="evidence" value="ECO:0007669"/>
    <property type="project" value="UniProtKB-SubCell"/>
</dbReference>
<dbReference type="GO" id="GO:0005524">
    <property type="term" value="F:ATP binding"/>
    <property type="evidence" value="ECO:0007669"/>
    <property type="project" value="InterPro"/>
</dbReference>
<dbReference type="GO" id="GO:0031072">
    <property type="term" value="F:heat shock protein binding"/>
    <property type="evidence" value="ECO:0007669"/>
    <property type="project" value="InterPro"/>
</dbReference>
<dbReference type="GO" id="GO:0051082">
    <property type="term" value="F:unfolded protein binding"/>
    <property type="evidence" value="ECO:0007669"/>
    <property type="project" value="UniProtKB-UniRule"/>
</dbReference>
<dbReference type="GO" id="GO:0008270">
    <property type="term" value="F:zinc ion binding"/>
    <property type="evidence" value="ECO:0007669"/>
    <property type="project" value="UniProtKB-UniRule"/>
</dbReference>
<dbReference type="GO" id="GO:0051085">
    <property type="term" value="P:chaperone cofactor-dependent protein refolding"/>
    <property type="evidence" value="ECO:0007669"/>
    <property type="project" value="TreeGrafter"/>
</dbReference>
<dbReference type="GO" id="GO:0006260">
    <property type="term" value="P:DNA replication"/>
    <property type="evidence" value="ECO:0007669"/>
    <property type="project" value="UniProtKB-KW"/>
</dbReference>
<dbReference type="GO" id="GO:0042026">
    <property type="term" value="P:protein refolding"/>
    <property type="evidence" value="ECO:0007669"/>
    <property type="project" value="TreeGrafter"/>
</dbReference>
<dbReference type="GO" id="GO:0009408">
    <property type="term" value="P:response to heat"/>
    <property type="evidence" value="ECO:0007669"/>
    <property type="project" value="InterPro"/>
</dbReference>
<dbReference type="CDD" id="cd06257">
    <property type="entry name" value="DnaJ"/>
    <property type="match status" value="1"/>
</dbReference>
<dbReference type="CDD" id="cd10747">
    <property type="entry name" value="DnaJ_C"/>
    <property type="match status" value="1"/>
</dbReference>
<dbReference type="CDD" id="cd10719">
    <property type="entry name" value="DnaJ_zf"/>
    <property type="match status" value="1"/>
</dbReference>
<dbReference type="FunFam" id="1.10.287.110:FF:000034">
    <property type="entry name" value="Chaperone protein DnaJ"/>
    <property type="match status" value="1"/>
</dbReference>
<dbReference type="FunFam" id="2.10.230.10:FF:000002">
    <property type="entry name" value="Molecular chaperone DnaJ"/>
    <property type="match status" value="1"/>
</dbReference>
<dbReference type="FunFam" id="2.60.260.20:FF:000004">
    <property type="entry name" value="Molecular chaperone DnaJ"/>
    <property type="match status" value="1"/>
</dbReference>
<dbReference type="Gene3D" id="1.10.287.110">
    <property type="entry name" value="DnaJ domain"/>
    <property type="match status" value="1"/>
</dbReference>
<dbReference type="Gene3D" id="2.10.230.10">
    <property type="entry name" value="Heat shock protein DnaJ, cysteine-rich domain"/>
    <property type="match status" value="1"/>
</dbReference>
<dbReference type="Gene3D" id="2.60.260.20">
    <property type="entry name" value="Urease metallochaperone UreE, N-terminal domain"/>
    <property type="match status" value="2"/>
</dbReference>
<dbReference type="HAMAP" id="MF_01152">
    <property type="entry name" value="DnaJ"/>
    <property type="match status" value="1"/>
</dbReference>
<dbReference type="InterPro" id="IPR012724">
    <property type="entry name" value="DnaJ"/>
</dbReference>
<dbReference type="InterPro" id="IPR002939">
    <property type="entry name" value="DnaJ_C"/>
</dbReference>
<dbReference type="InterPro" id="IPR001623">
    <property type="entry name" value="DnaJ_domain"/>
</dbReference>
<dbReference type="InterPro" id="IPR018253">
    <property type="entry name" value="DnaJ_domain_CS"/>
</dbReference>
<dbReference type="InterPro" id="IPR008971">
    <property type="entry name" value="HSP40/DnaJ_pept-bd"/>
</dbReference>
<dbReference type="InterPro" id="IPR001305">
    <property type="entry name" value="HSP_DnaJ_Cys-rich_dom"/>
</dbReference>
<dbReference type="InterPro" id="IPR036410">
    <property type="entry name" value="HSP_DnaJ_Cys-rich_dom_sf"/>
</dbReference>
<dbReference type="InterPro" id="IPR036869">
    <property type="entry name" value="J_dom_sf"/>
</dbReference>
<dbReference type="NCBIfam" id="TIGR02349">
    <property type="entry name" value="DnaJ_bact"/>
    <property type="match status" value="1"/>
</dbReference>
<dbReference type="NCBIfam" id="NF008035">
    <property type="entry name" value="PRK10767.1"/>
    <property type="match status" value="1"/>
</dbReference>
<dbReference type="PANTHER" id="PTHR43096:SF48">
    <property type="entry name" value="CHAPERONE PROTEIN DNAJ"/>
    <property type="match status" value="1"/>
</dbReference>
<dbReference type="PANTHER" id="PTHR43096">
    <property type="entry name" value="DNAJ HOMOLOG 1, MITOCHONDRIAL-RELATED"/>
    <property type="match status" value="1"/>
</dbReference>
<dbReference type="Pfam" id="PF00226">
    <property type="entry name" value="DnaJ"/>
    <property type="match status" value="1"/>
</dbReference>
<dbReference type="Pfam" id="PF01556">
    <property type="entry name" value="DnaJ_C"/>
    <property type="match status" value="1"/>
</dbReference>
<dbReference type="Pfam" id="PF00684">
    <property type="entry name" value="DnaJ_CXXCXGXG"/>
    <property type="match status" value="1"/>
</dbReference>
<dbReference type="PRINTS" id="PR00625">
    <property type="entry name" value="JDOMAIN"/>
</dbReference>
<dbReference type="SMART" id="SM00271">
    <property type="entry name" value="DnaJ"/>
    <property type="match status" value="1"/>
</dbReference>
<dbReference type="SUPFAM" id="SSF46565">
    <property type="entry name" value="Chaperone J-domain"/>
    <property type="match status" value="1"/>
</dbReference>
<dbReference type="SUPFAM" id="SSF57938">
    <property type="entry name" value="DnaJ/Hsp40 cysteine-rich domain"/>
    <property type="match status" value="1"/>
</dbReference>
<dbReference type="SUPFAM" id="SSF49493">
    <property type="entry name" value="HSP40/DnaJ peptide-binding domain"/>
    <property type="match status" value="2"/>
</dbReference>
<dbReference type="PROSITE" id="PS00636">
    <property type="entry name" value="DNAJ_1"/>
    <property type="match status" value="1"/>
</dbReference>
<dbReference type="PROSITE" id="PS50076">
    <property type="entry name" value="DNAJ_2"/>
    <property type="match status" value="1"/>
</dbReference>
<dbReference type="PROSITE" id="PS51188">
    <property type="entry name" value="ZF_CR"/>
    <property type="match status" value="1"/>
</dbReference>
<evidence type="ECO:0000255" key="1">
    <source>
        <dbReference type="HAMAP-Rule" id="MF_01152"/>
    </source>
</evidence>
<proteinExistence type="inferred from homology"/>
<organism>
    <name type="scientific">Nitrosomonas europaea (strain ATCC 19718 / CIP 103999 / KCTC 2705 / NBRC 14298)</name>
    <dbReference type="NCBI Taxonomy" id="228410"/>
    <lineage>
        <taxon>Bacteria</taxon>
        <taxon>Pseudomonadati</taxon>
        <taxon>Pseudomonadota</taxon>
        <taxon>Betaproteobacteria</taxon>
        <taxon>Nitrosomonadales</taxon>
        <taxon>Nitrosomonadaceae</taxon>
        <taxon>Nitrosomonas</taxon>
    </lineage>
</organism>
<gene>
    <name evidence="1" type="primary">dnaJ</name>
    <name type="ordered locus">NE1948</name>
</gene>
<name>DNAJ_NITEU</name>
<feature type="chain" id="PRO_0000070841" description="Chaperone protein DnaJ">
    <location>
        <begin position="1"/>
        <end position="369"/>
    </location>
</feature>
<feature type="domain" description="J" evidence="1">
    <location>
        <begin position="5"/>
        <end position="70"/>
    </location>
</feature>
<feature type="repeat" description="CXXCXGXG motif">
    <location>
        <begin position="141"/>
        <end position="148"/>
    </location>
</feature>
<feature type="repeat" description="CXXCXGXG motif">
    <location>
        <begin position="158"/>
        <end position="165"/>
    </location>
</feature>
<feature type="repeat" description="CXXCXGXG motif">
    <location>
        <begin position="180"/>
        <end position="187"/>
    </location>
</feature>
<feature type="repeat" description="CXXCXGXG motif">
    <location>
        <begin position="194"/>
        <end position="201"/>
    </location>
</feature>
<feature type="zinc finger region" description="CR-type" evidence="1">
    <location>
        <begin position="128"/>
        <end position="206"/>
    </location>
</feature>
<feature type="binding site" evidence="1">
    <location>
        <position position="141"/>
    </location>
    <ligand>
        <name>Zn(2+)</name>
        <dbReference type="ChEBI" id="CHEBI:29105"/>
        <label>1</label>
    </ligand>
</feature>
<feature type="binding site" evidence="1">
    <location>
        <position position="144"/>
    </location>
    <ligand>
        <name>Zn(2+)</name>
        <dbReference type="ChEBI" id="CHEBI:29105"/>
        <label>1</label>
    </ligand>
</feature>
<feature type="binding site" evidence="1">
    <location>
        <position position="158"/>
    </location>
    <ligand>
        <name>Zn(2+)</name>
        <dbReference type="ChEBI" id="CHEBI:29105"/>
        <label>2</label>
    </ligand>
</feature>
<feature type="binding site" evidence="1">
    <location>
        <position position="161"/>
    </location>
    <ligand>
        <name>Zn(2+)</name>
        <dbReference type="ChEBI" id="CHEBI:29105"/>
        <label>2</label>
    </ligand>
</feature>
<feature type="binding site" evidence="1">
    <location>
        <position position="180"/>
    </location>
    <ligand>
        <name>Zn(2+)</name>
        <dbReference type="ChEBI" id="CHEBI:29105"/>
        <label>2</label>
    </ligand>
</feature>
<feature type="binding site" evidence="1">
    <location>
        <position position="183"/>
    </location>
    <ligand>
        <name>Zn(2+)</name>
        <dbReference type="ChEBI" id="CHEBI:29105"/>
        <label>2</label>
    </ligand>
</feature>
<feature type="binding site" evidence="1">
    <location>
        <position position="194"/>
    </location>
    <ligand>
        <name>Zn(2+)</name>
        <dbReference type="ChEBI" id="CHEBI:29105"/>
        <label>1</label>
    </ligand>
</feature>
<feature type="binding site" evidence="1">
    <location>
        <position position="197"/>
    </location>
    <ligand>
        <name>Zn(2+)</name>
        <dbReference type="ChEBI" id="CHEBI:29105"/>
        <label>1</label>
    </ligand>
</feature>
<keyword id="KW-0143">Chaperone</keyword>
<keyword id="KW-0963">Cytoplasm</keyword>
<keyword id="KW-0235">DNA replication</keyword>
<keyword id="KW-0479">Metal-binding</keyword>
<keyword id="KW-1185">Reference proteome</keyword>
<keyword id="KW-0677">Repeat</keyword>
<keyword id="KW-0346">Stress response</keyword>
<keyword id="KW-0862">Zinc</keyword>
<keyword id="KW-0863">Zinc-finger</keyword>
<reference key="1">
    <citation type="submission" date="1998-10" db="EMBL/GenBank/DDBJ databases">
        <title>Cloning, nucleotide sequence, and regulatory analysis of the Nitrosomonas europaea dnaK gene.</title>
        <authorList>
            <person name="Iizumi T."/>
        </authorList>
    </citation>
    <scope>NUCLEOTIDE SEQUENCE [GENOMIC DNA]</scope>
    <source>
        <strain>ATCC 19718 / CIP 103999 / KCTC 2705 / NBRC 14298</strain>
    </source>
</reference>
<reference key="2">
    <citation type="journal article" date="2003" name="J. Bacteriol.">
        <title>Complete genome sequence of the ammonia-oxidizing bacterium and obligate chemolithoautotroph Nitrosomonas europaea.</title>
        <authorList>
            <person name="Chain P."/>
            <person name="Lamerdin J.E."/>
            <person name="Larimer F.W."/>
            <person name="Regala W."/>
            <person name="Lao V."/>
            <person name="Land M.L."/>
            <person name="Hauser L."/>
            <person name="Hooper A.B."/>
            <person name="Klotz M.G."/>
            <person name="Norton J."/>
            <person name="Sayavedra-Soto L.A."/>
            <person name="Arciero D.M."/>
            <person name="Hommes N.G."/>
            <person name="Whittaker M.M."/>
            <person name="Arp D.J."/>
        </authorList>
    </citation>
    <scope>NUCLEOTIDE SEQUENCE [LARGE SCALE GENOMIC DNA]</scope>
    <source>
        <strain>ATCC 19718 / CIP 103999 / KCTC 2705 / NBRC 14298</strain>
    </source>
</reference>
<reference key="3">
    <citation type="journal article" date="1997" name="Appl. Environ. Microbiol.">
        <title>Cloning, nucleotide sequence, and regulatory analysis of the Nitrosomonas europaea dnaK gene.</title>
        <authorList>
            <person name="Iizumi T."/>
            <person name="Nakamura K."/>
        </authorList>
    </citation>
    <scope>NUCLEOTIDE SEQUENCE [GENOMIC DNA] OF 1-53</scope>
    <source>
        <strain>ATCC 19718 / CIP 103999 / KCTC 2705 / NBRC 14298</strain>
    </source>
</reference>
<protein>
    <recommendedName>
        <fullName evidence="1">Chaperone protein DnaJ</fullName>
    </recommendedName>
</protein>